<feature type="chain" id="PRO_0000302686" description="ATP synthase subunit alpha">
    <location>
        <begin position="1"/>
        <end position="505"/>
    </location>
</feature>
<feature type="binding site" evidence="2">
    <location>
        <begin position="170"/>
        <end position="177"/>
    </location>
    <ligand>
        <name>ATP</name>
        <dbReference type="ChEBI" id="CHEBI:30616"/>
    </ligand>
</feature>
<feature type="site" description="Required for activity" evidence="2">
    <location>
        <position position="363"/>
    </location>
</feature>
<accession>A2C6X5</accession>
<proteinExistence type="inferred from homology"/>
<sequence length="505" mass="53980">MVSIRPDEISAILKQQISDYDKSVSVSNVGTVLQIGDGIARVYGLEQVMAGELVEFEDGTEGIALNLEDDNVGAVLMGEGVGIQEGSTVKATGKIASVPVSDEMLGRVVTPLGQPMDGKGDIPSTESRLIESIAPGIIKRKSVHEPLQTGITSIDSMIPIGRGQRELIIGDRQTGKTAIAIDTIINQKGEDVVCVYVAVGQKAASVANVVEVLREKGALDYTVIVAASASDAAALQYLAPYTGAAIAESFMYKGKATLVIYDDLTKQAQAYRQMSLLLRRPPGREAYPGDVFYCHSRLLERAAKLSDAMGGGSMTALPIIETQAGDVSAYIPTNVISITDGQIFLSSDLFNSGLRPAINVGISVSRVGGAAQTKAIKKIAGTLKLELAQFDELAAFSQFASDLDEATQKQLGRGKRLRELLKQPQFAPLNLAEQVAIVYAGVKGLIDEVPEDQVTQFSRELRDYLKTNKPEYITKVQTEKVLNEDAETILKAAINEVKSSMLASA</sequence>
<keyword id="KW-0066">ATP synthesis</keyword>
<keyword id="KW-0067">ATP-binding</keyword>
<keyword id="KW-0139">CF(1)</keyword>
<keyword id="KW-0375">Hydrogen ion transport</keyword>
<keyword id="KW-0406">Ion transport</keyword>
<keyword id="KW-0472">Membrane</keyword>
<keyword id="KW-0547">Nucleotide-binding</keyword>
<keyword id="KW-0793">Thylakoid</keyword>
<keyword id="KW-1278">Translocase</keyword>
<keyword id="KW-0813">Transport</keyword>
<protein>
    <recommendedName>
        <fullName evidence="2">ATP synthase subunit alpha</fullName>
        <ecNumber evidence="2">7.1.2.2</ecNumber>
    </recommendedName>
    <alternativeName>
        <fullName evidence="2">ATP synthase F1 sector subunit alpha</fullName>
    </alternativeName>
    <alternativeName>
        <fullName evidence="2">F-ATPase subunit alpha</fullName>
    </alternativeName>
</protein>
<comment type="function">
    <text evidence="2">Produces ATP from ADP in the presence of a proton gradient across the membrane. The alpha chain is a regulatory subunit.</text>
</comment>
<comment type="catalytic activity">
    <reaction evidence="2">
        <text>ATP + H2O + 4 H(+)(in) = ADP + phosphate + 5 H(+)(out)</text>
        <dbReference type="Rhea" id="RHEA:57720"/>
        <dbReference type="ChEBI" id="CHEBI:15377"/>
        <dbReference type="ChEBI" id="CHEBI:15378"/>
        <dbReference type="ChEBI" id="CHEBI:30616"/>
        <dbReference type="ChEBI" id="CHEBI:43474"/>
        <dbReference type="ChEBI" id="CHEBI:456216"/>
        <dbReference type="EC" id="7.1.2.2"/>
    </reaction>
</comment>
<comment type="subunit">
    <text evidence="1">F-type ATPases have 2 components, CF(1) - the catalytic core - and CF(0) - the membrane proton channel. CF(1) has five subunits: alpha(3), beta(3), gamma(1), delta(1), epsilon(1). CF(0) has four main subunits: a(1), b(1), b'(1) and c(9-12) (By similarity).</text>
</comment>
<comment type="subcellular location">
    <subcellularLocation>
        <location evidence="2">Cellular thylakoid membrane</location>
        <topology evidence="2">Peripheral membrane protein</topology>
    </subcellularLocation>
</comment>
<comment type="similarity">
    <text evidence="2">Belongs to the ATPase alpha/beta chains family.</text>
</comment>
<gene>
    <name evidence="2" type="primary">atpA</name>
    <name type="ordered locus">P9303_04831</name>
</gene>
<organism>
    <name type="scientific">Prochlorococcus marinus (strain MIT 9303)</name>
    <dbReference type="NCBI Taxonomy" id="59922"/>
    <lineage>
        <taxon>Bacteria</taxon>
        <taxon>Bacillati</taxon>
        <taxon>Cyanobacteriota</taxon>
        <taxon>Cyanophyceae</taxon>
        <taxon>Synechococcales</taxon>
        <taxon>Prochlorococcaceae</taxon>
        <taxon>Prochlorococcus</taxon>
    </lineage>
</organism>
<dbReference type="EC" id="7.1.2.2" evidence="2"/>
<dbReference type="EMBL" id="CP000554">
    <property type="protein sequence ID" value="ABM77235.1"/>
    <property type="molecule type" value="Genomic_DNA"/>
</dbReference>
<dbReference type="RefSeq" id="WP_011825158.1">
    <property type="nucleotide sequence ID" value="NC_008820.1"/>
</dbReference>
<dbReference type="SMR" id="A2C6X5"/>
<dbReference type="STRING" id="59922.P9303_04831"/>
<dbReference type="KEGG" id="pmf:P9303_04831"/>
<dbReference type="HOGENOM" id="CLU_010091_2_1_3"/>
<dbReference type="BioCyc" id="PMAR59922:G1G80-445-MONOMER"/>
<dbReference type="Proteomes" id="UP000002274">
    <property type="component" value="Chromosome"/>
</dbReference>
<dbReference type="GO" id="GO:0031676">
    <property type="term" value="C:plasma membrane-derived thylakoid membrane"/>
    <property type="evidence" value="ECO:0007669"/>
    <property type="project" value="UniProtKB-SubCell"/>
</dbReference>
<dbReference type="GO" id="GO:0045259">
    <property type="term" value="C:proton-transporting ATP synthase complex"/>
    <property type="evidence" value="ECO:0007669"/>
    <property type="project" value="UniProtKB-KW"/>
</dbReference>
<dbReference type="GO" id="GO:0043531">
    <property type="term" value="F:ADP binding"/>
    <property type="evidence" value="ECO:0007669"/>
    <property type="project" value="TreeGrafter"/>
</dbReference>
<dbReference type="GO" id="GO:0005524">
    <property type="term" value="F:ATP binding"/>
    <property type="evidence" value="ECO:0007669"/>
    <property type="project" value="UniProtKB-UniRule"/>
</dbReference>
<dbReference type="GO" id="GO:0046933">
    <property type="term" value="F:proton-transporting ATP synthase activity, rotational mechanism"/>
    <property type="evidence" value="ECO:0007669"/>
    <property type="project" value="UniProtKB-UniRule"/>
</dbReference>
<dbReference type="CDD" id="cd18113">
    <property type="entry name" value="ATP-synt_F1_alpha_C"/>
    <property type="match status" value="1"/>
</dbReference>
<dbReference type="CDD" id="cd18116">
    <property type="entry name" value="ATP-synt_F1_alpha_N"/>
    <property type="match status" value="1"/>
</dbReference>
<dbReference type="CDD" id="cd01132">
    <property type="entry name" value="F1-ATPase_alpha_CD"/>
    <property type="match status" value="1"/>
</dbReference>
<dbReference type="FunFam" id="1.20.150.20:FF:000001">
    <property type="entry name" value="ATP synthase subunit alpha"/>
    <property type="match status" value="1"/>
</dbReference>
<dbReference type="FunFam" id="2.40.30.20:FF:000001">
    <property type="entry name" value="ATP synthase subunit alpha"/>
    <property type="match status" value="1"/>
</dbReference>
<dbReference type="FunFam" id="3.40.50.300:FF:000002">
    <property type="entry name" value="ATP synthase subunit alpha"/>
    <property type="match status" value="1"/>
</dbReference>
<dbReference type="Gene3D" id="2.40.30.20">
    <property type="match status" value="1"/>
</dbReference>
<dbReference type="Gene3D" id="1.20.150.20">
    <property type="entry name" value="ATP synthase alpha/beta chain, C-terminal domain"/>
    <property type="match status" value="1"/>
</dbReference>
<dbReference type="Gene3D" id="3.40.50.300">
    <property type="entry name" value="P-loop containing nucleotide triphosphate hydrolases"/>
    <property type="match status" value="1"/>
</dbReference>
<dbReference type="HAMAP" id="MF_01346">
    <property type="entry name" value="ATP_synth_alpha_bact"/>
    <property type="match status" value="1"/>
</dbReference>
<dbReference type="InterPro" id="IPR023366">
    <property type="entry name" value="ATP_synth_asu-like_sf"/>
</dbReference>
<dbReference type="InterPro" id="IPR000793">
    <property type="entry name" value="ATP_synth_asu_C"/>
</dbReference>
<dbReference type="InterPro" id="IPR038376">
    <property type="entry name" value="ATP_synth_asu_C_sf"/>
</dbReference>
<dbReference type="InterPro" id="IPR033732">
    <property type="entry name" value="ATP_synth_F1_a_nt-bd_dom"/>
</dbReference>
<dbReference type="InterPro" id="IPR005294">
    <property type="entry name" value="ATP_synth_F1_asu"/>
</dbReference>
<dbReference type="InterPro" id="IPR020003">
    <property type="entry name" value="ATPase_a/bsu_AS"/>
</dbReference>
<dbReference type="InterPro" id="IPR004100">
    <property type="entry name" value="ATPase_F1/V1/A1_a/bsu_N"/>
</dbReference>
<dbReference type="InterPro" id="IPR036121">
    <property type="entry name" value="ATPase_F1/V1/A1_a/bsu_N_sf"/>
</dbReference>
<dbReference type="InterPro" id="IPR000194">
    <property type="entry name" value="ATPase_F1/V1/A1_a/bsu_nucl-bd"/>
</dbReference>
<dbReference type="InterPro" id="IPR027417">
    <property type="entry name" value="P-loop_NTPase"/>
</dbReference>
<dbReference type="NCBIfam" id="TIGR00962">
    <property type="entry name" value="atpA"/>
    <property type="match status" value="1"/>
</dbReference>
<dbReference type="NCBIfam" id="NF009884">
    <property type="entry name" value="PRK13343.1"/>
    <property type="match status" value="1"/>
</dbReference>
<dbReference type="PANTHER" id="PTHR48082">
    <property type="entry name" value="ATP SYNTHASE SUBUNIT ALPHA, MITOCHONDRIAL"/>
    <property type="match status" value="1"/>
</dbReference>
<dbReference type="PANTHER" id="PTHR48082:SF2">
    <property type="entry name" value="ATP SYNTHASE SUBUNIT ALPHA, MITOCHONDRIAL"/>
    <property type="match status" value="1"/>
</dbReference>
<dbReference type="Pfam" id="PF00006">
    <property type="entry name" value="ATP-synt_ab"/>
    <property type="match status" value="1"/>
</dbReference>
<dbReference type="Pfam" id="PF00306">
    <property type="entry name" value="ATP-synt_ab_C"/>
    <property type="match status" value="1"/>
</dbReference>
<dbReference type="Pfam" id="PF02874">
    <property type="entry name" value="ATP-synt_ab_N"/>
    <property type="match status" value="1"/>
</dbReference>
<dbReference type="PIRSF" id="PIRSF039088">
    <property type="entry name" value="F_ATPase_subunit_alpha"/>
    <property type="match status" value="1"/>
</dbReference>
<dbReference type="SUPFAM" id="SSF47917">
    <property type="entry name" value="C-terminal domain of alpha and beta subunits of F1 ATP synthase"/>
    <property type="match status" value="1"/>
</dbReference>
<dbReference type="SUPFAM" id="SSF50615">
    <property type="entry name" value="N-terminal domain of alpha and beta subunits of F1 ATP synthase"/>
    <property type="match status" value="1"/>
</dbReference>
<dbReference type="SUPFAM" id="SSF52540">
    <property type="entry name" value="P-loop containing nucleoside triphosphate hydrolases"/>
    <property type="match status" value="1"/>
</dbReference>
<dbReference type="PROSITE" id="PS00152">
    <property type="entry name" value="ATPASE_ALPHA_BETA"/>
    <property type="match status" value="1"/>
</dbReference>
<reference key="1">
    <citation type="journal article" date="2007" name="PLoS Genet.">
        <title>Patterns and implications of gene gain and loss in the evolution of Prochlorococcus.</title>
        <authorList>
            <person name="Kettler G.C."/>
            <person name="Martiny A.C."/>
            <person name="Huang K."/>
            <person name="Zucker J."/>
            <person name="Coleman M.L."/>
            <person name="Rodrigue S."/>
            <person name="Chen F."/>
            <person name="Lapidus A."/>
            <person name="Ferriera S."/>
            <person name="Johnson J."/>
            <person name="Steglich C."/>
            <person name="Church G.M."/>
            <person name="Richardson P."/>
            <person name="Chisholm S.W."/>
        </authorList>
    </citation>
    <scope>NUCLEOTIDE SEQUENCE [LARGE SCALE GENOMIC DNA]</scope>
    <source>
        <strain>MIT 9303</strain>
    </source>
</reference>
<name>ATPA_PROM3</name>
<evidence type="ECO:0000250" key="1"/>
<evidence type="ECO:0000255" key="2">
    <source>
        <dbReference type="HAMAP-Rule" id="MF_01346"/>
    </source>
</evidence>